<gene>
    <name type="ordered locus">VFMJ11_0205</name>
</gene>
<sequence>MIIPWQDIAPDTLENLISEFVLREGTDYGEVEISHQEKVDQIKVLLKNGEAMVVFSELHETVDIQTKARFNPNLTNHNYD</sequence>
<organism>
    <name type="scientific">Aliivibrio fischeri (strain MJ11)</name>
    <name type="common">Vibrio fischeri</name>
    <dbReference type="NCBI Taxonomy" id="388396"/>
    <lineage>
        <taxon>Bacteria</taxon>
        <taxon>Pseudomonadati</taxon>
        <taxon>Pseudomonadota</taxon>
        <taxon>Gammaproteobacteria</taxon>
        <taxon>Vibrionales</taxon>
        <taxon>Vibrionaceae</taxon>
        <taxon>Aliivibrio</taxon>
    </lineage>
</organism>
<protein>
    <recommendedName>
        <fullName evidence="1">UPF0270 protein VFMJ11_0205</fullName>
    </recommendedName>
</protein>
<evidence type="ECO:0000255" key="1">
    <source>
        <dbReference type="HAMAP-Rule" id="MF_00690"/>
    </source>
</evidence>
<name>Y205_ALIFM</name>
<accession>B5FFY9</accession>
<proteinExistence type="inferred from homology"/>
<dbReference type="EMBL" id="CP001139">
    <property type="protein sequence ID" value="ACH64980.1"/>
    <property type="molecule type" value="Genomic_DNA"/>
</dbReference>
<dbReference type="RefSeq" id="WP_012532745.1">
    <property type="nucleotide sequence ID" value="NC_011184.1"/>
</dbReference>
<dbReference type="SMR" id="B5FFY9"/>
<dbReference type="GeneID" id="54162838"/>
<dbReference type="KEGG" id="vfm:VFMJ11_0205"/>
<dbReference type="HOGENOM" id="CLU_186759_1_0_6"/>
<dbReference type="Proteomes" id="UP000001857">
    <property type="component" value="Chromosome I"/>
</dbReference>
<dbReference type="Gene3D" id="1.10.10.610">
    <property type="entry name" value="YehU-like"/>
    <property type="match status" value="1"/>
</dbReference>
<dbReference type="HAMAP" id="MF_00690">
    <property type="entry name" value="UPF0270"/>
    <property type="match status" value="1"/>
</dbReference>
<dbReference type="InterPro" id="IPR010648">
    <property type="entry name" value="UPF0270"/>
</dbReference>
<dbReference type="InterPro" id="IPR036685">
    <property type="entry name" value="YehU-like_sf"/>
</dbReference>
<dbReference type="NCBIfam" id="NF003438">
    <property type="entry name" value="PRK04966.1"/>
    <property type="match status" value="1"/>
</dbReference>
<dbReference type="Pfam" id="PF06794">
    <property type="entry name" value="UPF0270"/>
    <property type="match status" value="1"/>
</dbReference>
<dbReference type="PIRSF" id="PIRSF006169">
    <property type="entry name" value="UCP006169"/>
    <property type="match status" value="1"/>
</dbReference>
<dbReference type="SUPFAM" id="SSF118001">
    <property type="entry name" value="YehU-like"/>
    <property type="match status" value="1"/>
</dbReference>
<feature type="chain" id="PRO_1000132028" description="UPF0270 protein VFMJ11_0205">
    <location>
        <begin position="1"/>
        <end position="80"/>
    </location>
</feature>
<comment type="similarity">
    <text evidence="1">Belongs to the UPF0270 family.</text>
</comment>
<reference key="1">
    <citation type="submission" date="2008-08" db="EMBL/GenBank/DDBJ databases">
        <title>Complete sequence of Vibrio fischeri strain MJ11.</title>
        <authorList>
            <person name="Mandel M.J."/>
            <person name="Stabb E.V."/>
            <person name="Ruby E.G."/>
            <person name="Ferriera S."/>
            <person name="Johnson J."/>
            <person name="Kravitz S."/>
            <person name="Beeson K."/>
            <person name="Sutton G."/>
            <person name="Rogers Y.-H."/>
            <person name="Friedman R."/>
            <person name="Frazier M."/>
            <person name="Venter J.C."/>
        </authorList>
    </citation>
    <scope>NUCLEOTIDE SEQUENCE [LARGE SCALE GENOMIC DNA]</scope>
    <source>
        <strain>MJ11</strain>
    </source>
</reference>